<gene>
    <name type="primary">FBX7</name>
    <name type="ordered locus">At2g03560</name>
    <name type="ORF">F19B11.1</name>
</gene>
<reference key="1">
    <citation type="journal article" date="1999" name="Nature">
        <title>Sequence and analysis of chromosome 2 of the plant Arabidopsis thaliana.</title>
        <authorList>
            <person name="Lin X."/>
            <person name="Kaul S."/>
            <person name="Rounsley S.D."/>
            <person name="Shea T.P."/>
            <person name="Benito M.-I."/>
            <person name="Town C.D."/>
            <person name="Fujii C.Y."/>
            <person name="Mason T.M."/>
            <person name="Bowman C.L."/>
            <person name="Barnstead M.E."/>
            <person name="Feldblyum T.V."/>
            <person name="Buell C.R."/>
            <person name="Ketchum K.A."/>
            <person name="Lee J.J."/>
            <person name="Ronning C.M."/>
            <person name="Koo H.L."/>
            <person name="Moffat K.S."/>
            <person name="Cronin L.A."/>
            <person name="Shen M."/>
            <person name="Pai G."/>
            <person name="Van Aken S."/>
            <person name="Umayam L."/>
            <person name="Tallon L.J."/>
            <person name="Gill J.E."/>
            <person name="Adams M.D."/>
            <person name="Carrera A.J."/>
            <person name="Creasy T.H."/>
            <person name="Goodman H.M."/>
            <person name="Somerville C.R."/>
            <person name="Copenhaver G.P."/>
            <person name="Preuss D."/>
            <person name="Nierman W.C."/>
            <person name="White O."/>
            <person name="Eisen J.A."/>
            <person name="Salzberg S.L."/>
            <person name="Fraser C.M."/>
            <person name="Venter J.C."/>
        </authorList>
    </citation>
    <scope>NUCLEOTIDE SEQUENCE [LARGE SCALE GENOMIC DNA]</scope>
    <source>
        <strain>cv. Columbia</strain>
    </source>
</reference>
<reference key="2">
    <citation type="journal article" date="2017" name="Plant J.">
        <title>Araport11: a complete reannotation of the Arabidopsis thaliana reference genome.</title>
        <authorList>
            <person name="Cheng C.Y."/>
            <person name="Krishnakumar V."/>
            <person name="Chan A.P."/>
            <person name="Thibaud-Nissen F."/>
            <person name="Schobel S."/>
            <person name="Town C.D."/>
        </authorList>
    </citation>
    <scope>GENOME REANNOTATION</scope>
    <source>
        <strain>cv. Columbia</strain>
    </source>
</reference>
<reference key="3">
    <citation type="journal article" date="2005" name="Plant Physiol.">
        <title>Analysis of the cDNAs of hypothetical genes on Arabidopsis chromosome 2 reveals numerous transcript variants.</title>
        <authorList>
            <person name="Xiao Y.-L."/>
            <person name="Smith S.R."/>
            <person name="Ishmael N."/>
            <person name="Redman J.C."/>
            <person name="Kumar N."/>
            <person name="Monaghan E.L."/>
            <person name="Ayele M."/>
            <person name="Haas B.J."/>
            <person name="Wu H.C."/>
            <person name="Town C.D."/>
        </authorList>
    </citation>
    <scope>NUCLEOTIDE SEQUENCE [LARGE SCALE MRNA] OF 1-192</scope>
    <source>
        <strain>cv. Columbia</strain>
    </source>
</reference>
<reference key="4">
    <citation type="journal article" date="2000" name="Trends Plant Sci.">
        <title>F-box proteins in Arabidopsis.</title>
        <authorList>
            <person name="Xiao W."/>
            <person name="Jang J.-C."/>
        </authorList>
    </citation>
    <scope>GENE FAMILY</scope>
    <scope>NOMENCLATURE</scope>
</reference>
<evidence type="ECO:0000305" key="1"/>
<accession>Q9ZPS0</accession>
<accession>F4IT82</accession>
<comment type="sequence caution" evidence="1">
    <conflict type="erroneous gene model prediction">
        <sequence resource="EMBL-CDS" id="AAD20064"/>
    </conflict>
</comment>
<sequence length="395" mass="46819">MGMTTDSMKKEETQKMSENHDWSKLCPDILRKIIESLSSLDFYRAKIVCSDWYSVWKTCVKRPLRPWRIIYRAKYYISTSLMLFDPDEDKIYKNLVGVSDESYRLASSGNWLLMADSRLDFYIVNLLTGKRINLPPMESKIRGAQARFVQSKYFYKSRYICFDNCNSIRISEKEVFESKRAAVLWIDERTGDYFVAWIFNKHYLFTHKKGDDSWCWNRKWTKPGYLDLAYKNNKLYIYNTDNYIKIFDFSGDYPKEDIENNPYHNRPLQYIRGPGEVLLSKRIAIQKSGEVLIILRVIKGYNFLFWIFKMNFERRKWERVDSIGDDEMIIFGHGLTVRAPVQDIGDGVKSGSICFVEYDRQPFSGVFDLATGKVTRPNKFRYHMSYSHWFLPGFA</sequence>
<dbReference type="EMBL" id="AC006836">
    <property type="protein sequence ID" value="AAD20064.2"/>
    <property type="status" value="ALT_SEQ"/>
    <property type="molecule type" value="Genomic_DNA"/>
</dbReference>
<dbReference type="EMBL" id="CP002685">
    <property type="protein sequence ID" value="AEC05714.2"/>
    <property type="molecule type" value="Genomic_DNA"/>
</dbReference>
<dbReference type="EMBL" id="AY461639">
    <property type="status" value="NOT_ANNOTATED_CDS"/>
    <property type="molecule type" value="mRNA"/>
</dbReference>
<dbReference type="PIR" id="H84449">
    <property type="entry name" value="H84449"/>
</dbReference>
<dbReference type="RefSeq" id="NP_565302.5">
    <property type="nucleotide sequence ID" value="NM_126406.6"/>
</dbReference>
<dbReference type="FunCoup" id="Q9ZPS0">
    <property type="interactions" value="32"/>
</dbReference>
<dbReference type="STRING" id="3702.Q9ZPS0"/>
<dbReference type="PaxDb" id="3702-AT2G03560.1"/>
<dbReference type="EnsemblPlants" id="AT2G03560.1">
    <property type="protein sequence ID" value="AT2G03560.1"/>
    <property type="gene ID" value="AT2G03560"/>
</dbReference>
<dbReference type="GeneID" id="814885"/>
<dbReference type="Gramene" id="AT2G03560.1">
    <property type="protein sequence ID" value="AT2G03560.1"/>
    <property type="gene ID" value="AT2G03560"/>
</dbReference>
<dbReference type="KEGG" id="ath:AT2G03560"/>
<dbReference type="Araport" id="AT2G03560"/>
<dbReference type="TAIR" id="AT2G03560">
    <property type="gene designation" value="ATFDB7"/>
</dbReference>
<dbReference type="eggNOG" id="ENOG502R32S">
    <property type="taxonomic scope" value="Eukaryota"/>
</dbReference>
<dbReference type="HOGENOM" id="CLU_019286_7_1_1"/>
<dbReference type="InParanoid" id="Q9ZPS0"/>
<dbReference type="OMA" id="WIFNKHY"/>
<dbReference type="PhylomeDB" id="Q9ZPS0"/>
<dbReference type="PRO" id="PR:Q9ZPS0"/>
<dbReference type="Proteomes" id="UP000006548">
    <property type="component" value="Chromosome 2"/>
</dbReference>
<dbReference type="ExpressionAtlas" id="Q9ZPS0">
    <property type="expression patterns" value="baseline and differential"/>
</dbReference>
<dbReference type="Gene3D" id="1.20.1280.50">
    <property type="match status" value="1"/>
</dbReference>
<dbReference type="InterPro" id="IPR036047">
    <property type="entry name" value="F-box-like_dom_sf"/>
</dbReference>
<dbReference type="InterPro" id="IPR050942">
    <property type="entry name" value="F-box_BR-signaling"/>
</dbReference>
<dbReference type="InterPro" id="IPR001810">
    <property type="entry name" value="F-box_dom"/>
</dbReference>
<dbReference type="InterPro" id="IPR005174">
    <property type="entry name" value="KIB1-4_b-propeller"/>
</dbReference>
<dbReference type="PANTHER" id="PTHR44259:SF104">
    <property type="entry name" value="F-BOX ONLY PROTEIN (DUF295)-RELATED"/>
    <property type="match status" value="1"/>
</dbReference>
<dbReference type="PANTHER" id="PTHR44259">
    <property type="entry name" value="OS07G0183000 PROTEIN-RELATED"/>
    <property type="match status" value="1"/>
</dbReference>
<dbReference type="Pfam" id="PF03478">
    <property type="entry name" value="Beta-prop_KIB1-4"/>
    <property type="match status" value="1"/>
</dbReference>
<dbReference type="Pfam" id="PF00646">
    <property type="entry name" value="F-box"/>
    <property type="match status" value="1"/>
</dbReference>
<dbReference type="SUPFAM" id="SSF81383">
    <property type="entry name" value="F-box domain"/>
    <property type="match status" value="1"/>
</dbReference>
<keyword id="KW-1185">Reference proteome</keyword>
<keyword id="KW-0677">Repeat</keyword>
<protein>
    <recommendedName>
        <fullName>F-box only protein 7</fullName>
    </recommendedName>
</protein>
<proteinExistence type="evidence at transcript level"/>
<organism>
    <name type="scientific">Arabidopsis thaliana</name>
    <name type="common">Mouse-ear cress</name>
    <dbReference type="NCBI Taxonomy" id="3702"/>
    <lineage>
        <taxon>Eukaryota</taxon>
        <taxon>Viridiplantae</taxon>
        <taxon>Streptophyta</taxon>
        <taxon>Embryophyta</taxon>
        <taxon>Tracheophyta</taxon>
        <taxon>Spermatophyta</taxon>
        <taxon>Magnoliopsida</taxon>
        <taxon>eudicotyledons</taxon>
        <taxon>Gunneridae</taxon>
        <taxon>Pentapetalae</taxon>
        <taxon>rosids</taxon>
        <taxon>malvids</taxon>
        <taxon>Brassicales</taxon>
        <taxon>Brassicaceae</taxon>
        <taxon>Camelineae</taxon>
        <taxon>Arabidopsis</taxon>
    </lineage>
</organism>
<feature type="chain" id="PRO_0000273540" description="F-box only protein 7">
    <location>
        <begin position="1"/>
        <end position="395"/>
    </location>
</feature>
<feature type="domain" description="F-box">
    <location>
        <begin position="19"/>
        <end position="70"/>
    </location>
</feature>
<feature type="sequence conflict" description="In Ref. 3; AY461639." evidence="1" ref="3">
    <original>D</original>
    <variation>E</variation>
    <location>
        <position position="192"/>
    </location>
</feature>
<name>FBX7_ARATH</name>